<evidence type="ECO:0000255" key="1">
    <source>
        <dbReference type="HAMAP-Rule" id="MF_01684"/>
    </source>
</evidence>
<accession>C4ZRQ2</accession>
<sequence length="232" mass="24354">MKIGIIGAMEEEVTLLRDKIENRQTISLGGCEIYTGQLNGTEVALLKSGIGKVAAALGATLLLEHCKPDVIINTGSAGGLAPTLKVGDIVVSDEARYHDADVTAFGYEYGQLPGCPAGFKADDKLIAAAEACIAELNLNAVRGLIVSGDAFINGSVGLAKIRHNFPQAIAVEMEATAIAHVCHNFNVPFVVVRAISDVADQQSHLSFDEFLAVAAKQSSLMVESLVQKLAHG</sequence>
<name>MTNN_ECOBW</name>
<comment type="function">
    <text evidence="1">Catalyzes the irreversible cleavage of the glycosidic bond in both 5'-methylthioadenosine (MTA) and S-adenosylhomocysteine (SAH/AdoHcy) to adenine and the corresponding thioribose, 5'-methylthioribose and S-ribosylhomocysteine, respectively. Also cleaves 5'-deoxyadenosine, a toxic by-product of radical S-adenosylmethionine (SAM) enzymes, into 5-deoxyribose and adenine. Thus, is required for in vivo function of the radical SAM enzymes biotin synthase and lipoic acid synthase, that are inhibited by 5'-deoxyadenosine accumulation.</text>
</comment>
<comment type="catalytic activity">
    <reaction evidence="1">
        <text>S-adenosyl-L-homocysteine + H2O = S-(5-deoxy-D-ribos-5-yl)-L-homocysteine + adenine</text>
        <dbReference type="Rhea" id="RHEA:17805"/>
        <dbReference type="ChEBI" id="CHEBI:15377"/>
        <dbReference type="ChEBI" id="CHEBI:16708"/>
        <dbReference type="ChEBI" id="CHEBI:57856"/>
        <dbReference type="ChEBI" id="CHEBI:58195"/>
        <dbReference type="EC" id="3.2.2.9"/>
    </reaction>
</comment>
<comment type="catalytic activity">
    <reaction evidence="1">
        <text>S-methyl-5'-thioadenosine + H2O = 5-(methylsulfanyl)-D-ribose + adenine</text>
        <dbReference type="Rhea" id="RHEA:13617"/>
        <dbReference type="ChEBI" id="CHEBI:15377"/>
        <dbReference type="ChEBI" id="CHEBI:16708"/>
        <dbReference type="ChEBI" id="CHEBI:17509"/>
        <dbReference type="ChEBI" id="CHEBI:78440"/>
        <dbReference type="EC" id="3.2.2.9"/>
    </reaction>
</comment>
<comment type="catalytic activity">
    <reaction evidence="1">
        <text>5'-deoxyadenosine + H2O = 5-deoxy-D-ribose + adenine</text>
        <dbReference type="Rhea" id="RHEA:29859"/>
        <dbReference type="ChEBI" id="CHEBI:15377"/>
        <dbReference type="ChEBI" id="CHEBI:16708"/>
        <dbReference type="ChEBI" id="CHEBI:17319"/>
        <dbReference type="ChEBI" id="CHEBI:149540"/>
        <dbReference type="EC" id="3.2.2.9"/>
    </reaction>
    <physiologicalReaction direction="left-to-right" evidence="1">
        <dbReference type="Rhea" id="RHEA:29860"/>
    </physiologicalReaction>
</comment>
<comment type="pathway">
    <text evidence="1">Amino-acid biosynthesis; L-methionine biosynthesis via salvage pathway; S-methyl-5-thio-alpha-D-ribose 1-phosphate from S-methyl-5'-thioadenosine (hydrolase route): step 1/2.</text>
</comment>
<comment type="subunit">
    <text evidence="1">Homodimer.</text>
</comment>
<comment type="similarity">
    <text evidence="1">Belongs to the PNP/UDP phosphorylase family. MtnN subfamily.</text>
</comment>
<feature type="chain" id="PRO_1000215909" description="5'-methylthioadenosine/S-adenosylhomocysteine nucleosidase">
    <location>
        <begin position="1"/>
        <end position="232"/>
    </location>
</feature>
<feature type="active site" description="Proton acceptor" evidence="1">
    <location>
        <position position="12"/>
    </location>
</feature>
<feature type="active site" description="Proton donor" evidence="1">
    <location>
        <position position="197"/>
    </location>
</feature>
<feature type="binding site" evidence="1">
    <location>
        <position position="78"/>
    </location>
    <ligand>
        <name>substrate</name>
    </ligand>
</feature>
<feature type="binding site" evidence="1">
    <location>
        <position position="152"/>
    </location>
    <ligand>
        <name>substrate</name>
    </ligand>
</feature>
<feature type="binding site" evidence="1">
    <location>
        <begin position="173"/>
        <end position="174"/>
    </location>
    <ligand>
        <name>substrate</name>
    </ligand>
</feature>
<reference key="1">
    <citation type="journal article" date="2009" name="J. Bacteriol.">
        <title>Genomic sequencing reveals regulatory mutations and recombinational events in the widely used MC4100 lineage of Escherichia coli K-12.</title>
        <authorList>
            <person name="Ferenci T."/>
            <person name="Zhou Z."/>
            <person name="Betteridge T."/>
            <person name="Ren Y."/>
            <person name="Liu Y."/>
            <person name="Feng L."/>
            <person name="Reeves P.R."/>
            <person name="Wang L."/>
        </authorList>
    </citation>
    <scope>NUCLEOTIDE SEQUENCE [LARGE SCALE GENOMIC DNA]</scope>
    <source>
        <strain>K12 / MC4100 / BW2952</strain>
    </source>
</reference>
<keyword id="KW-0028">Amino-acid biosynthesis</keyword>
<keyword id="KW-0378">Hydrolase</keyword>
<keyword id="KW-0486">Methionine biosynthesis</keyword>
<proteinExistence type="inferred from homology"/>
<gene>
    <name evidence="1" type="primary">mtnN</name>
    <name type="ordered locus">BWG_0152</name>
</gene>
<organism>
    <name type="scientific">Escherichia coli (strain K12 / MC4100 / BW2952)</name>
    <dbReference type="NCBI Taxonomy" id="595496"/>
    <lineage>
        <taxon>Bacteria</taxon>
        <taxon>Pseudomonadati</taxon>
        <taxon>Pseudomonadota</taxon>
        <taxon>Gammaproteobacteria</taxon>
        <taxon>Enterobacterales</taxon>
        <taxon>Enterobacteriaceae</taxon>
        <taxon>Escherichia</taxon>
    </lineage>
</organism>
<protein>
    <recommendedName>
        <fullName evidence="1">5'-methylthioadenosine/S-adenosylhomocysteine nucleosidase</fullName>
        <shortName evidence="1">MTA/SAH nucleosidase</shortName>
        <shortName evidence="1">MTAN</shortName>
        <ecNumber evidence="1">3.2.2.9</ecNumber>
    </recommendedName>
    <alternativeName>
        <fullName evidence="1">5'-deoxyadenosine nucleosidase</fullName>
        <shortName evidence="1">DOA nucleosidase</shortName>
        <shortName evidence="1">dAdo nucleosidase</shortName>
    </alternativeName>
    <alternativeName>
        <fullName evidence="1">5'-methylthioadenosine nucleosidase</fullName>
        <shortName evidence="1">MTA nucleosidase</shortName>
    </alternativeName>
    <alternativeName>
        <fullName evidence="1">S-adenosylhomocysteine nucleosidase</fullName>
        <shortName evidence="1">AdoHcy nucleosidase</shortName>
        <shortName evidence="1">SAH nucleosidase</shortName>
        <shortName evidence="1">SRH nucleosidase</shortName>
    </alternativeName>
</protein>
<dbReference type="EC" id="3.2.2.9" evidence="1"/>
<dbReference type="EMBL" id="CP001396">
    <property type="protein sequence ID" value="ACR61884.1"/>
    <property type="molecule type" value="Genomic_DNA"/>
</dbReference>
<dbReference type="RefSeq" id="WP_000689844.1">
    <property type="nucleotide sequence ID" value="NC_012759.1"/>
</dbReference>
<dbReference type="SMR" id="C4ZRQ2"/>
<dbReference type="GeneID" id="93777267"/>
<dbReference type="KEGG" id="ebw:BWG_0152"/>
<dbReference type="HOGENOM" id="CLU_031248_2_2_6"/>
<dbReference type="UniPathway" id="UPA00904">
    <property type="reaction ID" value="UER00871"/>
</dbReference>
<dbReference type="GO" id="GO:0005829">
    <property type="term" value="C:cytosol"/>
    <property type="evidence" value="ECO:0007669"/>
    <property type="project" value="TreeGrafter"/>
</dbReference>
<dbReference type="GO" id="GO:0008782">
    <property type="term" value="F:adenosylhomocysteine nucleosidase activity"/>
    <property type="evidence" value="ECO:0007669"/>
    <property type="project" value="UniProtKB-UniRule"/>
</dbReference>
<dbReference type="GO" id="GO:0008930">
    <property type="term" value="F:methylthioadenosine nucleosidase activity"/>
    <property type="evidence" value="ECO:0007669"/>
    <property type="project" value="UniProtKB-UniRule"/>
</dbReference>
<dbReference type="GO" id="GO:0019509">
    <property type="term" value="P:L-methionine salvage from methylthioadenosine"/>
    <property type="evidence" value="ECO:0007669"/>
    <property type="project" value="UniProtKB-UniRule"/>
</dbReference>
<dbReference type="GO" id="GO:0019284">
    <property type="term" value="P:L-methionine salvage from S-adenosylmethionine"/>
    <property type="evidence" value="ECO:0007669"/>
    <property type="project" value="TreeGrafter"/>
</dbReference>
<dbReference type="GO" id="GO:0046124">
    <property type="term" value="P:purine deoxyribonucleoside catabolic process"/>
    <property type="evidence" value="ECO:0007669"/>
    <property type="project" value="UniProtKB-UniRule"/>
</dbReference>
<dbReference type="CDD" id="cd09008">
    <property type="entry name" value="MTAN"/>
    <property type="match status" value="1"/>
</dbReference>
<dbReference type="FunFam" id="3.40.50.1580:FF:000001">
    <property type="entry name" value="MTA/SAH nucleosidase family protein"/>
    <property type="match status" value="1"/>
</dbReference>
<dbReference type="Gene3D" id="3.40.50.1580">
    <property type="entry name" value="Nucleoside phosphorylase domain"/>
    <property type="match status" value="1"/>
</dbReference>
<dbReference type="HAMAP" id="MF_01684">
    <property type="entry name" value="Salvage_MtnN"/>
    <property type="match status" value="1"/>
</dbReference>
<dbReference type="InterPro" id="IPR010049">
    <property type="entry name" value="MTA_SAH_Nsdase"/>
</dbReference>
<dbReference type="InterPro" id="IPR000845">
    <property type="entry name" value="Nucleoside_phosphorylase_d"/>
</dbReference>
<dbReference type="InterPro" id="IPR035994">
    <property type="entry name" value="Nucleoside_phosphorylase_sf"/>
</dbReference>
<dbReference type="NCBIfam" id="TIGR01704">
    <property type="entry name" value="MTA_SAH-Nsdase"/>
    <property type="match status" value="1"/>
</dbReference>
<dbReference type="NCBIfam" id="NF004079">
    <property type="entry name" value="PRK05584.1"/>
    <property type="match status" value="1"/>
</dbReference>
<dbReference type="PANTHER" id="PTHR46832">
    <property type="entry name" value="5'-METHYLTHIOADENOSINE/S-ADENOSYLHOMOCYSTEINE NUCLEOSIDASE"/>
    <property type="match status" value="1"/>
</dbReference>
<dbReference type="PANTHER" id="PTHR46832:SF1">
    <property type="entry name" value="5'-METHYLTHIOADENOSINE_S-ADENOSYLHOMOCYSTEINE NUCLEOSIDASE"/>
    <property type="match status" value="1"/>
</dbReference>
<dbReference type="Pfam" id="PF01048">
    <property type="entry name" value="PNP_UDP_1"/>
    <property type="match status" value="1"/>
</dbReference>
<dbReference type="SUPFAM" id="SSF53167">
    <property type="entry name" value="Purine and uridine phosphorylases"/>
    <property type="match status" value="1"/>
</dbReference>